<organism>
    <name type="scientific">Escherichia fergusonii (strain ATCC 35469 / DSM 13698 / CCUG 18766 / IAM 14443 / JCM 21226 / LMG 7866 / NBRC 102419 / NCTC 12128 / CDC 0568-73)</name>
    <dbReference type="NCBI Taxonomy" id="585054"/>
    <lineage>
        <taxon>Bacteria</taxon>
        <taxon>Pseudomonadati</taxon>
        <taxon>Pseudomonadota</taxon>
        <taxon>Gammaproteobacteria</taxon>
        <taxon>Enterobacterales</taxon>
        <taxon>Enterobacteriaceae</taxon>
        <taxon>Escherichia</taxon>
    </lineage>
</organism>
<gene>
    <name evidence="1" type="primary">glnD</name>
    <name type="ordered locus">EFER_0189</name>
</gene>
<sequence length="890" mass="102433">MNTLPEQYANTALPTLPGQPQNPCAWPRDELTVCGIKAHIDTFQRWLGDAFDNGISAEQLIEARTEFIDQLLQRLWIEAGFSQIADLALVAVGGYGRGELHPLSDVDLLILSRKKLPDDQAQKVGELLTLLWDVKLEVGHSVRTLEECMLEGLSDLTVATNLIESRLLIGDVALFLELQKHIFSEGFWPSDKFYAAKVEEQNQRHQRYHGTSYNLEPDIKSSPGGLRDIHTLQWVARRHFGATSLDEMVGFGFLTSAERAELNECLHILWRIRFALHLVVSRYDNRLLFDRQLSVAQRLNYSGEGNEPVEQMMKDYFRVTRRVSELNQMLLQLFDEAILALPADEKPRPIDDEFQLRGSLIDLRDETLFMRQPEAILRMFYTMVRNSEITGIYSTTLRHLRHARRHLQQPLCNIPEARKLFLSILRHPGAVRRGLLPMHRHSVLGAYMPQWSHIVGQMQFDLFHAYTVDEHTIRVMLKLESFASEETRQRHPLCVDVWPRLPSTELIFIAALFHDIAKGRGGDHSILGAQDVVHFAELHGLNSRETQLVAWLVRQHLLMSVTAQRRDIQDPEVIKQFAEEVQTENRLRYLVCLTVADICATNETLWNSWKQSLLRELYFATEKQLRRGMQNTPDMRERVRHHQLQALALLRMDNIDEEALHHIWSRCRANYFVRHSPNQLAWHARHLLKHDLSKSLVLLSPHATRGGTEIFIWSPDRPYLFAAVCAELDRRNLSVHDAQIFTTRDGMAMDTFIVLEPDGSPLSADRHEVIRFGLEQVLTQSSWQPPQPRRQPAKLRHFTVETEVTFLPTHTDRKSFLELIALDQPGLLARVGKIFADLGISLHGARITTIGERVEDLFIIATADRRALNNELQQEVHQRLTEALNPNDKG</sequence>
<feature type="chain" id="PRO_1000119367" description="Bifunctional uridylyltransferase/uridylyl-removing enzyme">
    <location>
        <begin position="1"/>
        <end position="890"/>
    </location>
</feature>
<feature type="domain" description="HD" evidence="2">
    <location>
        <begin position="468"/>
        <end position="590"/>
    </location>
</feature>
<feature type="domain" description="ACT 1" evidence="1">
    <location>
        <begin position="709"/>
        <end position="789"/>
    </location>
</feature>
<feature type="domain" description="ACT 2" evidence="1">
    <location>
        <begin position="816"/>
        <end position="890"/>
    </location>
</feature>
<feature type="region of interest" description="Uridylyltransferase">
    <location>
        <begin position="1"/>
        <end position="349"/>
    </location>
</feature>
<feature type="region of interest" description="Uridylyl-removing">
    <location>
        <begin position="350"/>
        <end position="708"/>
    </location>
</feature>
<protein>
    <recommendedName>
        <fullName evidence="1">Bifunctional uridylyltransferase/uridylyl-removing enzyme</fullName>
        <shortName evidence="1">UTase/UR</shortName>
    </recommendedName>
    <alternativeName>
        <fullName evidence="1">Bifunctional [protein-PII] modification enzyme</fullName>
    </alternativeName>
    <alternativeName>
        <fullName evidence="1">Bifunctional nitrogen sensor protein</fullName>
    </alternativeName>
    <domain>
        <recommendedName>
            <fullName evidence="1">[Protein-PII] uridylyltransferase</fullName>
            <shortName evidence="1">PII uridylyltransferase</shortName>
            <shortName evidence="1">UTase</shortName>
            <ecNumber evidence="1">2.7.7.59</ecNumber>
        </recommendedName>
    </domain>
    <domain>
        <recommendedName>
            <fullName evidence="1">[Protein-PII]-UMP uridylyl-removing enzyme</fullName>
            <shortName evidence="1">UR</shortName>
            <ecNumber evidence="1">3.1.4.-</ecNumber>
        </recommendedName>
    </domain>
</protein>
<reference key="1">
    <citation type="journal article" date="2009" name="PLoS Genet.">
        <title>Organised genome dynamics in the Escherichia coli species results in highly diverse adaptive paths.</title>
        <authorList>
            <person name="Touchon M."/>
            <person name="Hoede C."/>
            <person name="Tenaillon O."/>
            <person name="Barbe V."/>
            <person name="Baeriswyl S."/>
            <person name="Bidet P."/>
            <person name="Bingen E."/>
            <person name="Bonacorsi S."/>
            <person name="Bouchier C."/>
            <person name="Bouvet O."/>
            <person name="Calteau A."/>
            <person name="Chiapello H."/>
            <person name="Clermont O."/>
            <person name="Cruveiller S."/>
            <person name="Danchin A."/>
            <person name="Diard M."/>
            <person name="Dossat C."/>
            <person name="Karoui M.E."/>
            <person name="Frapy E."/>
            <person name="Garry L."/>
            <person name="Ghigo J.M."/>
            <person name="Gilles A.M."/>
            <person name="Johnson J."/>
            <person name="Le Bouguenec C."/>
            <person name="Lescat M."/>
            <person name="Mangenot S."/>
            <person name="Martinez-Jehanne V."/>
            <person name="Matic I."/>
            <person name="Nassif X."/>
            <person name="Oztas S."/>
            <person name="Petit M.A."/>
            <person name="Pichon C."/>
            <person name="Rouy Z."/>
            <person name="Ruf C.S."/>
            <person name="Schneider D."/>
            <person name="Tourret J."/>
            <person name="Vacherie B."/>
            <person name="Vallenet D."/>
            <person name="Medigue C."/>
            <person name="Rocha E.P.C."/>
            <person name="Denamur E."/>
        </authorList>
    </citation>
    <scope>NUCLEOTIDE SEQUENCE [LARGE SCALE GENOMIC DNA]</scope>
    <source>
        <strain>ATCC 35469 / DSM 13698 / BCRC 15582 / CCUG 18766 / IAM 14443 / JCM 21226 / LMG 7866 / NBRC 102419 / NCTC 12128 / CDC 0568-73</strain>
    </source>
</reference>
<proteinExistence type="inferred from homology"/>
<evidence type="ECO:0000255" key="1">
    <source>
        <dbReference type="HAMAP-Rule" id="MF_00277"/>
    </source>
</evidence>
<evidence type="ECO:0000255" key="2">
    <source>
        <dbReference type="PROSITE-ProRule" id="PRU01175"/>
    </source>
</evidence>
<keyword id="KW-0378">Hydrolase</keyword>
<keyword id="KW-0460">Magnesium</keyword>
<keyword id="KW-0511">Multifunctional enzyme</keyword>
<keyword id="KW-0548">Nucleotidyltransferase</keyword>
<keyword id="KW-0677">Repeat</keyword>
<keyword id="KW-0808">Transferase</keyword>
<dbReference type="EC" id="2.7.7.59" evidence="1"/>
<dbReference type="EC" id="3.1.4.-" evidence="1"/>
<dbReference type="EMBL" id="CU928158">
    <property type="protein sequence ID" value="CAQ87770.1"/>
    <property type="molecule type" value="Genomic_DNA"/>
</dbReference>
<dbReference type="RefSeq" id="WP_001094549.1">
    <property type="nucleotide sequence ID" value="NC_011740.1"/>
</dbReference>
<dbReference type="SMR" id="B7LWA6"/>
<dbReference type="GeneID" id="75058726"/>
<dbReference type="KEGG" id="efe:EFER_0189"/>
<dbReference type="HOGENOM" id="CLU_012833_0_0_6"/>
<dbReference type="OrthoDB" id="9758038at2"/>
<dbReference type="Proteomes" id="UP000000745">
    <property type="component" value="Chromosome"/>
</dbReference>
<dbReference type="GO" id="GO:0008773">
    <property type="term" value="F:[protein-PII] uridylyltransferase activity"/>
    <property type="evidence" value="ECO:0007669"/>
    <property type="project" value="UniProtKB-UniRule"/>
</dbReference>
<dbReference type="GO" id="GO:0008081">
    <property type="term" value="F:phosphoric diester hydrolase activity"/>
    <property type="evidence" value="ECO:0007669"/>
    <property type="project" value="UniProtKB-UniRule"/>
</dbReference>
<dbReference type="GO" id="GO:0006808">
    <property type="term" value="P:regulation of nitrogen utilization"/>
    <property type="evidence" value="ECO:0007669"/>
    <property type="project" value="UniProtKB-UniRule"/>
</dbReference>
<dbReference type="CDD" id="cd04899">
    <property type="entry name" value="ACT_ACR-UUR-like_2"/>
    <property type="match status" value="1"/>
</dbReference>
<dbReference type="CDD" id="cd04900">
    <property type="entry name" value="ACT_UUR-like_1"/>
    <property type="match status" value="1"/>
</dbReference>
<dbReference type="CDD" id="cd00077">
    <property type="entry name" value="HDc"/>
    <property type="match status" value="1"/>
</dbReference>
<dbReference type="CDD" id="cd05401">
    <property type="entry name" value="NT_GlnE_GlnD_like"/>
    <property type="match status" value="1"/>
</dbReference>
<dbReference type="FunFam" id="1.10.3210.10:FF:000005">
    <property type="entry name" value="Bifunctional uridylyltransferase/uridylyl-removing enzyme"/>
    <property type="match status" value="1"/>
</dbReference>
<dbReference type="Gene3D" id="1.10.3210.10">
    <property type="entry name" value="Hypothetical protein af1432"/>
    <property type="match status" value="1"/>
</dbReference>
<dbReference type="Gene3D" id="1.20.120.330">
    <property type="entry name" value="Nucleotidyltransferases domain 2"/>
    <property type="match status" value="1"/>
</dbReference>
<dbReference type="HAMAP" id="MF_00277">
    <property type="entry name" value="PII_uridylyl_transf"/>
    <property type="match status" value="1"/>
</dbReference>
<dbReference type="InterPro" id="IPR045865">
    <property type="entry name" value="ACT-like_dom_sf"/>
</dbReference>
<dbReference type="InterPro" id="IPR002912">
    <property type="entry name" value="ACT_dom"/>
</dbReference>
<dbReference type="InterPro" id="IPR003607">
    <property type="entry name" value="HD/PDEase_dom"/>
</dbReference>
<dbReference type="InterPro" id="IPR006674">
    <property type="entry name" value="HD_domain"/>
</dbReference>
<dbReference type="InterPro" id="IPR043519">
    <property type="entry name" value="NT_sf"/>
</dbReference>
<dbReference type="InterPro" id="IPR013546">
    <property type="entry name" value="PII_UdlTrfase/GS_AdlTrfase"/>
</dbReference>
<dbReference type="InterPro" id="IPR002934">
    <property type="entry name" value="Polymerase_NTP_transf_dom"/>
</dbReference>
<dbReference type="InterPro" id="IPR010043">
    <property type="entry name" value="UTase/UR"/>
</dbReference>
<dbReference type="NCBIfam" id="NF002487">
    <property type="entry name" value="PRK01759.1"/>
    <property type="match status" value="1"/>
</dbReference>
<dbReference type="NCBIfam" id="NF003448">
    <property type="entry name" value="PRK05007.1"/>
    <property type="match status" value="1"/>
</dbReference>
<dbReference type="NCBIfam" id="TIGR01693">
    <property type="entry name" value="UTase_glnD"/>
    <property type="match status" value="1"/>
</dbReference>
<dbReference type="PANTHER" id="PTHR47320">
    <property type="entry name" value="BIFUNCTIONAL URIDYLYLTRANSFERASE/URIDYLYL-REMOVING ENZYME"/>
    <property type="match status" value="1"/>
</dbReference>
<dbReference type="PANTHER" id="PTHR47320:SF1">
    <property type="entry name" value="BIFUNCTIONAL URIDYLYLTRANSFERASE_URIDYLYL-REMOVING ENZYME"/>
    <property type="match status" value="1"/>
</dbReference>
<dbReference type="Pfam" id="PF01842">
    <property type="entry name" value="ACT"/>
    <property type="match status" value="2"/>
</dbReference>
<dbReference type="Pfam" id="PF08335">
    <property type="entry name" value="GlnD_UR_UTase"/>
    <property type="match status" value="1"/>
</dbReference>
<dbReference type="Pfam" id="PF01966">
    <property type="entry name" value="HD"/>
    <property type="match status" value="1"/>
</dbReference>
<dbReference type="Pfam" id="PF01909">
    <property type="entry name" value="NTP_transf_2"/>
    <property type="match status" value="1"/>
</dbReference>
<dbReference type="PIRSF" id="PIRSF006288">
    <property type="entry name" value="PII_uridyltransf"/>
    <property type="match status" value="1"/>
</dbReference>
<dbReference type="SMART" id="SM00471">
    <property type="entry name" value="HDc"/>
    <property type="match status" value="1"/>
</dbReference>
<dbReference type="SUPFAM" id="SSF55021">
    <property type="entry name" value="ACT-like"/>
    <property type="match status" value="2"/>
</dbReference>
<dbReference type="SUPFAM" id="SSF109604">
    <property type="entry name" value="HD-domain/PDEase-like"/>
    <property type="match status" value="1"/>
</dbReference>
<dbReference type="SUPFAM" id="SSF81301">
    <property type="entry name" value="Nucleotidyltransferase"/>
    <property type="match status" value="1"/>
</dbReference>
<dbReference type="SUPFAM" id="SSF81593">
    <property type="entry name" value="Nucleotidyltransferase substrate binding subunit/domain"/>
    <property type="match status" value="1"/>
</dbReference>
<dbReference type="PROSITE" id="PS51671">
    <property type="entry name" value="ACT"/>
    <property type="match status" value="2"/>
</dbReference>
<dbReference type="PROSITE" id="PS51831">
    <property type="entry name" value="HD"/>
    <property type="match status" value="1"/>
</dbReference>
<comment type="function">
    <text evidence="1">Modifies, by uridylylation and deuridylylation, the PII regulatory proteins (GlnB and homologs), in response to the nitrogen status of the cell that GlnD senses through the glutamine level. Under low glutamine levels, catalyzes the conversion of the PII proteins and UTP to PII-UMP and PPi, while under higher glutamine levels, GlnD hydrolyzes PII-UMP to PII and UMP (deuridylylation). Thus, controls uridylylation state and activity of the PII proteins, and plays an important role in the regulation of nitrogen assimilation and metabolism.</text>
</comment>
<comment type="catalytic activity">
    <reaction evidence="1">
        <text>[protein-PII]-L-tyrosine + UTP = [protein-PII]-uridylyl-L-tyrosine + diphosphate</text>
        <dbReference type="Rhea" id="RHEA:13673"/>
        <dbReference type="Rhea" id="RHEA-COMP:12147"/>
        <dbReference type="Rhea" id="RHEA-COMP:12148"/>
        <dbReference type="ChEBI" id="CHEBI:33019"/>
        <dbReference type="ChEBI" id="CHEBI:46398"/>
        <dbReference type="ChEBI" id="CHEBI:46858"/>
        <dbReference type="ChEBI" id="CHEBI:90602"/>
        <dbReference type="EC" id="2.7.7.59"/>
    </reaction>
</comment>
<comment type="catalytic activity">
    <reaction evidence="1">
        <text>[protein-PII]-uridylyl-L-tyrosine + H2O = [protein-PII]-L-tyrosine + UMP + H(+)</text>
        <dbReference type="Rhea" id="RHEA:48600"/>
        <dbReference type="Rhea" id="RHEA-COMP:12147"/>
        <dbReference type="Rhea" id="RHEA-COMP:12148"/>
        <dbReference type="ChEBI" id="CHEBI:15377"/>
        <dbReference type="ChEBI" id="CHEBI:15378"/>
        <dbReference type="ChEBI" id="CHEBI:46858"/>
        <dbReference type="ChEBI" id="CHEBI:57865"/>
        <dbReference type="ChEBI" id="CHEBI:90602"/>
    </reaction>
</comment>
<comment type="cofactor">
    <cofactor evidence="1">
        <name>Mg(2+)</name>
        <dbReference type="ChEBI" id="CHEBI:18420"/>
    </cofactor>
</comment>
<comment type="activity regulation">
    <text evidence="1">Uridylyltransferase (UTase) activity is inhibited by glutamine, while glutamine activates uridylyl-removing (UR) activity.</text>
</comment>
<comment type="domain">
    <text evidence="1">Has four distinct domains: an N-terminal nucleotidyltransferase (NT) domain responsible for UTase activity, a central HD domain that encodes UR activity, and two C-terminal ACT domains that seem to have a role in glutamine sensing.</text>
</comment>
<comment type="similarity">
    <text evidence="1">Belongs to the GlnD family.</text>
</comment>
<accession>B7LWA6</accession>
<name>GLND_ESCF3</name>